<evidence type="ECO:0000250" key="1"/>
<evidence type="ECO:0000250" key="2">
    <source>
        <dbReference type="UniProtKB" id="Q7Z406"/>
    </source>
</evidence>
<evidence type="ECO:0000255" key="3"/>
<evidence type="ECO:0000255" key="4">
    <source>
        <dbReference type="PROSITE-ProRule" id="PRU00116"/>
    </source>
</evidence>
<evidence type="ECO:0000255" key="5">
    <source>
        <dbReference type="PROSITE-ProRule" id="PRU00782"/>
    </source>
</evidence>
<evidence type="ECO:0000255" key="6">
    <source>
        <dbReference type="PROSITE-ProRule" id="PRU01190"/>
    </source>
</evidence>
<evidence type="ECO:0000256" key="7">
    <source>
        <dbReference type="SAM" id="MobiDB-lite"/>
    </source>
</evidence>
<evidence type="ECO:0000269" key="8">
    <source>
    </source>
</evidence>
<evidence type="ECO:0000269" key="9">
    <source>
    </source>
</evidence>
<evidence type="ECO:0000269" key="10">
    <source>
    </source>
</evidence>
<evidence type="ECO:0000303" key="11">
    <source>
    </source>
</evidence>
<evidence type="ECO:0000303" key="12">
    <source>
    </source>
</evidence>
<evidence type="ECO:0000305" key="13"/>
<evidence type="ECO:0007744" key="14">
    <source>
    </source>
</evidence>
<dbReference type="EMBL" id="AY363100">
    <property type="protein sequence ID" value="AAQ24173.1"/>
    <property type="molecule type" value="mRNA"/>
</dbReference>
<dbReference type="EMBL" id="AY205605">
    <property type="protein sequence ID" value="AAO47092.1"/>
    <property type="molecule type" value="mRNA"/>
</dbReference>
<dbReference type="EMBL" id="EF602040">
    <property type="protein sequence ID" value="ABR10605.1"/>
    <property type="molecule type" value="mRNA"/>
</dbReference>
<dbReference type="EMBL" id="AC150895">
    <property type="status" value="NOT_ANNOTATED_CDS"/>
    <property type="molecule type" value="Genomic_DNA"/>
</dbReference>
<dbReference type="EMBL" id="AC157653">
    <property type="status" value="NOT_ANNOTATED_CDS"/>
    <property type="molecule type" value="Genomic_DNA"/>
</dbReference>
<dbReference type="EMBL" id="BC041796">
    <property type="protein sequence ID" value="AAH41796.1"/>
    <property type="molecule type" value="mRNA"/>
</dbReference>
<dbReference type="CCDS" id="CCDS39943.1">
    <molecule id="Q6URW6-2"/>
</dbReference>
<dbReference type="CCDS" id="CCDS71951.1">
    <molecule id="Q6URW6-1"/>
</dbReference>
<dbReference type="RefSeq" id="NP_001258467.1">
    <molecule id="Q6URW6-3"/>
    <property type="nucleotide sequence ID" value="NM_001271538.1"/>
</dbReference>
<dbReference type="RefSeq" id="NP_001258469.1">
    <molecule id="Q6URW6-1"/>
    <property type="nucleotide sequence ID" value="NM_001271540.1"/>
</dbReference>
<dbReference type="RefSeq" id="NP_082297.1">
    <molecule id="Q6URW6-2"/>
    <property type="nucleotide sequence ID" value="NM_028021.3"/>
</dbReference>
<dbReference type="RefSeq" id="XP_011249204.1">
    <property type="nucleotide sequence ID" value="XM_011250902.2"/>
</dbReference>
<dbReference type="RefSeq" id="XP_011249205.1">
    <molecule id="Q6URW6-1"/>
    <property type="nucleotide sequence ID" value="XM_011250903.2"/>
</dbReference>
<dbReference type="RefSeq" id="XP_017167802.1">
    <molecule id="Q6URW6-1"/>
    <property type="nucleotide sequence ID" value="XM_017312313.2"/>
</dbReference>
<dbReference type="RefSeq" id="XP_030098856.1">
    <molecule id="Q6URW6-2"/>
    <property type="nucleotide sequence ID" value="XM_030242996.1"/>
</dbReference>
<dbReference type="RefSeq" id="XP_036009336.1">
    <molecule id="Q6URW6-2"/>
    <property type="nucleotide sequence ID" value="XM_036153443.1"/>
</dbReference>
<dbReference type="RefSeq" id="XP_036009337.1">
    <molecule id="Q6URW6-2"/>
    <property type="nucleotide sequence ID" value="XM_036153444.1"/>
</dbReference>
<dbReference type="RefSeq" id="XP_036009338.1">
    <molecule id="Q6URW6-2"/>
    <property type="nucleotide sequence ID" value="XM_036153445.1"/>
</dbReference>
<dbReference type="RefSeq" id="XP_036009339.1">
    <molecule id="Q6URW6-2"/>
    <property type="nucleotide sequence ID" value="XM_036153446.1"/>
</dbReference>
<dbReference type="SMR" id="Q6URW6"/>
<dbReference type="BioGRID" id="215057">
    <property type="interactions" value="9"/>
</dbReference>
<dbReference type="FunCoup" id="Q6URW6">
    <property type="interactions" value="38"/>
</dbReference>
<dbReference type="IntAct" id="Q6URW6">
    <property type="interactions" value="4"/>
</dbReference>
<dbReference type="MINT" id="Q6URW6"/>
<dbReference type="STRING" id="10090.ENSMUSP00000046059"/>
<dbReference type="BindingDB" id="Q6URW6"/>
<dbReference type="ChEMBL" id="CHEMBL4295870"/>
<dbReference type="GlyGen" id="Q6URW6">
    <property type="glycosylation" value="1 site"/>
</dbReference>
<dbReference type="iPTMnet" id="Q6URW6"/>
<dbReference type="PhosphoSitePlus" id="Q6URW6"/>
<dbReference type="SwissPalm" id="Q6URW6"/>
<dbReference type="jPOST" id="Q6URW6"/>
<dbReference type="PaxDb" id="10090-ENSMUSP00000103531"/>
<dbReference type="PeptideAtlas" id="Q6URW6"/>
<dbReference type="ProteomicsDB" id="287335">
    <molecule id="Q6URW6-1"/>
</dbReference>
<dbReference type="ProteomicsDB" id="287336">
    <molecule id="Q6URW6-2"/>
</dbReference>
<dbReference type="ProteomicsDB" id="287337">
    <molecule id="Q6URW6-3"/>
</dbReference>
<dbReference type="Pumba" id="Q6URW6"/>
<dbReference type="Antibodypedia" id="32261">
    <property type="antibodies" value="259 antibodies from 33 providers"/>
</dbReference>
<dbReference type="DNASU" id="71960"/>
<dbReference type="Ensembl" id="ENSMUST00000048102.15">
    <molecule id="Q6URW6-1"/>
    <property type="protein sequence ID" value="ENSMUSP00000046059.8"/>
    <property type="gene ID" value="ENSMUSG00000030739.20"/>
</dbReference>
<dbReference type="Ensembl" id="ENSMUST00000107899.10">
    <molecule id="Q6URW6-2"/>
    <property type="protein sequence ID" value="ENSMUSP00000103531.3"/>
    <property type="gene ID" value="ENSMUSG00000030739.20"/>
</dbReference>
<dbReference type="Ensembl" id="ENSMUST00000207775.2">
    <molecule id="Q6URW6-3"/>
    <property type="protein sequence ID" value="ENSMUSP00000147115.2"/>
    <property type="gene ID" value="ENSMUSG00000030739.20"/>
</dbReference>
<dbReference type="GeneID" id="71960"/>
<dbReference type="KEGG" id="mmu:71960"/>
<dbReference type="UCSC" id="uc009gqi.2">
    <molecule id="Q6URW6-2"/>
    <property type="organism name" value="mouse"/>
</dbReference>
<dbReference type="UCSC" id="uc009gqj.2">
    <molecule id="Q6URW6-1"/>
    <property type="organism name" value="mouse"/>
</dbReference>
<dbReference type="UCSC" id="uc012fjt.2">
    <molecule id="Q6URW6-3"/>
    <property type="organism name" value="mouse"/>
</dbReference>
<dbReference type="AGR" id="MGI:1919210"/>
<dbReference type="CTD" id="79784"/>
<dbReference type="MGI" id="MGI:1919210">
    <property type="gene designation" value="Myh14"/>
</dbReference>
<dbReference type="VEuPathDB" id="HostDB:ENSMUSG00000030739"/>
<dbReference type="eggNOG" id="KOG0161">
    <property type="taxonomic scope" value="Eukaryota"/>
</dbReference>
<dbReference type="GeneTree" id="ENSGT00940000158808"/>
<dbReference type="HOGENOM" id="CLU_000192_4_0_1"/>
<dbReference type="InParanoid" id="Q6URW6"/>
<dbReference type="OMA" id="QXELAAS"/>
<dbReference type="OrthoDB" id="86386at9989"/>
<dbReference type="TreeFam" id="TF333601"/>
<dbReference type="Reactome" id="R-MMU-5627123">
    <property type="pathway name" value="RHO GTPases activate PAKs"/>
</dbReference>
<dbReference type="BioGRID-ORCS" id="71960">
    <property type="hits" value="3 hits in 78 CRISPR screens"/>
</dbReference>
<dbReference type="CD-CODE" id="CE726F99">
    <property type="entry name" value="Postsynaptic density"/>
</dbReference>
<dbReference type="ChiTaRS" id="Myh14">
    <property type="organism name" value="mouse"/>
</dbReference>
<dbReference type="PRO" id="PR:Q6URW6"/>
<dbReference type="Proteomes" id="UP000000589">
    <property type="component" value="Chromosome 7"/>
</dbReference>
<dbReference type="RNAct" id="Q6URW6">
    <property type="molecule type" value="protein"/>
</dbReference>
<dbReference type="Bgee" id="ENSMUSG00000030739">
    <property type="expression patterns" value="Expressed in substantia propria of cornea and 213 other cell types or tissues"/>
</dbReference>
<dbReference type="ExpressionAtlas" id="Q6URW6">
    <property type="expression patterns" value="baseline and differential"/>
</dbReference>
<dbReference type="GO" id="GO:0030424">
    <property type="term" value="C:axon"/>
    <property type="evidence" value="ECO:0000314"/>
    <property type="project" value="MGI"/>
</dbReference>
<dbReference type="GO" id="GO:0005903">
    <property type="term" value="C:brush border"/>
    <property type="evidence" value="ECO:0000314"/>
    <property type="project" value="UniProtKB"/>
</dbReference>
<dbReference type="GO" id="GO:0005737">
    <property type="term" value="C:cytoplasm"/>
    <property type="evidence" value="ECO:0000314"/>
    <property type="project" value="MGI"/>
</dbReference>
<dbReference type="GO" id="GO:0030426">
    <property type="term" value="C:growth cone"/>
    <property type="evidence" value="ECO:0000314"/>
    <property type="project" value="MGI"/>
</dbReference>
<dbReference type="GO" id="GO:0043209">
    <property type="term" value="C:myelin sheath"/>
    <property type="evidence" value="ECO:0007005"/>
    <property type="project" value="UniProtKB"/>
</dbReference>
<dbReference type="GO" id="GO:0016459">
    <property type="term" value="C:myosin complex"/>
    <property type="evidence" value="ECO:0000314"/>
    <property type="project" value="MGI"/>
</dbReference>
<dbReference type="GO" id="GO:0016460">
    <property type="term" value="C:myosin II complex"/>
    <property type="evidence" value="ECO:0007669"/>
    <property type="project" value="Ensembl"/>
</dbReference>
<dbReference type="GO" id="GO:0097513">
    <property type="term" value="C:myosin II filament"/>
    <property type="evidence" value="ECO:0007669"/>
    <property type="project" value="Ensembl"/>
</dbReference>
<dbReference type="GO" id="GO:0001725">
    <property type="term" value="C:stress fiber"/>
    <property type="evidence" value="ECO:0000314"/>
    <property type="project" value="MGI"/>
</dbReference>
<dbReference type="GO" id="GO:0051015">
    <property type="term" value="F:actin filament binding"/>
    <property type="evidence" value="ECO:0000314"/>
    <property type="project" value="MGI"/>
</dbReference>
<dbReference type="GO" id="GO:0005524">
    <property type="term" value="F:ATP binding"/>
    <property type="evidence" value="ECO:0000314"/>
    <property type="project" value="MGI"/>
</dbReference>
<dbReference type="GO" id="GO:0005516">
    <property type="term" value="F:calmodulin binding"/>
    <property type="evidence" value="ECO:0007669"/>
    <property type="project" value="UniProtKB-KW"/>
</dbReference>
<dbReference type="GO" id="GO:0000146">
    <property type="term" value="F:microfilament motor activity"/>
    <property type="evidence" value="ECO:0000314"/>
    <property type="project" value="MGI"/>
</dbReference>
<dbReference type="GO" id="GO:0060090">
    <property type="term" value="F:molecular adaptor activity"/>
    <property type="evidence" value="ECO:0000269"/>
    <property type="project" value="DisProt"/>
</dbReference>
<dbReference type="GO" id="GO:0030048">
    <property type="term" value="P:actin filament-based movement"/>
    <property type="evidence" value="ECO:0000314"/>
    <property type="project" value="MGI"/>
</dbReference>
<dbReference type="GO" id="GO:0031032">
    <property type="term" value="P:actomyosin structure organization"/>
    <property type="evidence" value="ECO:0007669"/>
    <property type="project" value="Ensembl"/>
</dbReference>
<dbReference type="GO" id="GO:0007005">
    <property type="term" value="P:mitochondrion organization"/>
    <property type="evidence" value="ECO:0007669"/>
    <property type="project" value="Ensembl"/>
</dbReference>
<dbReference type="GO" id="GO:0019228">
    <property type="term" value="P:neuronal action potential"/>
    <property type="evidence" value="ECO:0007669"/>
    <property type="project" value="Ensembl"/>
</dbReference>
<dbReference type="GO" id="GO:0008360">
    <property type="term" value="P:regulation of cell shape"/>
    <property type="evidence" value="ECO:0007669"/>
    <property type="project" value="UniProtKB-KW"/>
</dbReference>
<dbReference type="GO" id="GO:0007605">
    <property type="term" value="P:sensory perception of sound"/>
    <property type="evidence" value="ECO:0007669"/>
    <property type="project" value="Ensembl"/>
</dbReference>
<dbReference type="GO" id="GO:0003009">
    <property type="term" value="P:skeletal muscle contraction"/>
    <property type="evidence" value="ECO:0007669"/>
    <property type="project" value="Ensembl"/>
</dbReference>
<dbReference type="GO" id="GO:0007519">
    <property type="term" value="P:skeletal muscle tissue development"/>
    <property type="evidence" value="ECO:0007669"/>
    <property type="project" value="Ensembl"/>
</dbReference>
<dbReference type="GO" id="GO:0071625">
    <property type="term" value="P:vocalization behavior"/>
    <property type="evidence" value="ECO:0007669"/>
    <property type="project" value="Ensembl"/>
</dbReference>
<dbReference type="CDD" id="cd14930">
    <property type="entry name" value="MYSc_Myh14_mammals"/>
    <property type="match status" value="1"/>
</dbReference>
<dbReference type="DisProt" id="DP01022"/>
<dbReference type="FunFam" id="2.30.30.360:FF:000001">
    <property type="entry name" value="Myosin heavy chain"/>
    <property type="match status" value="1"/>
</dbReference>
<dbReference type="FunFam" id="1.20.5.4820:FF:000002">
    <property type="entry name" value="Myosin heavy chain 10"/>
    <property type="match status" value="1"/>
</dbReference>
<dbReference type="FunFam" id="1.20.58.530:FF:000003">
    <property type="entry name" value="Myosin heavy chain 10"/>
    <property type="match status" value="1"/>
</dbReference>
<dbReference type="FunFam" id="1.20.120.720:FF:000001">
    <property type="entry name" value="Myosin heavy chain, muscle"/>
    <property type="match status" value="1"/>
</dbReference>
<dbReference type="FunFam" id="1.20.5.340:FF:000007">
    <property type="entry name" value="Myosin heavy chain, non-muscle"/>
    <property type="match status" value="1"/>
</dbReference>
<dbReference type="FunFam" id="1.20.5.340:FF:000009">
    <property type="entry name" value="myosin-11 isoform X2"/>
    <property type="match status" value="1"/>
</dbReference>
<dbReference type="FunFam" id="3.40.850.10:FF:000101">
    <property type="entry name" value="Slow myosin heavy chain 2"/>
    <property type="match status" value="1"/>
</dbReference>
<dbReference type="Gene3D" id="1.10.10.820">
    <property type="match status" value="1"/>
</dbReference>
<dbReference type="Gene3D" id="1.20.5.340">
    <property type="match status" value="3"/>
</dbReference>
<dbReference type="Gene3D" id="1.20.5.4820">
    <property type="match status" value="1"/>
</dbReference>
<dbReference type="Gene3D" id="1.20.58.530">
    <property type="match status" value="1"/>
</dbReference>
<dbReference type="Gene3D" id="6.10.250.2420">
    <property type="match status" value="1"/>
</dbReference>
<dbReference type="Gene3D" id="3.40.850.10">
    <property type="entry name" value="Kinesin motor domain"/>
    <property type="match status" value="1"/>
</dbReference>
<dbReference type="Gene3D" id="2.30.30.360">
    <property type="entry name" value="Myosin S1 fragment, N-terminal"/>
    <property type="match status" value="1"/>
</dbReference>
<dbReference type="Gene3D" id="1.20.120.720">
    <property type="entry name" value="Myosin VI head, motor domain, U50 subdomain"/>
    <property type="match status" value="1"/>
</dbReference>
<dbReference type="InterPro" id="IPR000048">
    <property type="entry name" value="IQ_motif_EF-hand-BS"/>
</dbReference>
<dbReference type="InterPro" id="IPR036961">
    <property type="entry name" value="Kinesin_motor_dom_sf"/>
</dbReference>
<dbReference type="InterPro" id="IPR001609">
    <property type="entry name" value="Myosin_head_motor_dom-like"/>
</dbReference>
<dbReference type="InterPro" id="IPR004009">
    <property type="entry name" value="Myosin_N"/>
</dbReference>
<dbReference type="InterPro" id="IPR008989">
    <property type="entry name" value="Myosin_S1_N"/>
</dbReference>
<dbReference type="InterPro" id="IPR002928">
    <property type="entry name" value="Myosin_tail"/>
</dbReference>
<dbReference type="InterPro" id="IPR027417">
    <property type="entry name" value="P-loop_NTPase"/>
</dbReference>
<dbReference type="PANTHER" id="PTHR45615">
    <property type="entry name" value="MYOSIN HEAVY CHAIN, NON-MUSCLE"/>
    <property type="match status" value="1"/>
</dbReference>
<dbReference type="PANTHER" id="PTHR45615:SF31">
    <property type="entry name" value="MYOSIN-14"/>
    <property type="match status" value="1"/>
</dbReference>
<dbReference type="Pfam" id="PF00063">
    <property type="entry name" value="Myosin_head"/>
    <property type="match status" value="1"/>
</dbReference>
<dbReference type="Pfam" id="PF01576">
    <property type="entry name" value="Myosin_tail_1"/>
    <property type="match status" value="1"/>
</dbReference>
<dbReference type="PRINTS" id="PR00193">
    <property type="entry name" value="MYOSINHEAVY"/>
</dbReference>
<dbReference type="SMART" id="SM00015">
    <property type="entry name" value="IQ"/>
    <property type="match status" value="1"/>
</dbReference>
<dbReference type="SMART" id="SM00242">
    <property type="entry name" value="MYSc"/>
    <property type="match status" value="1"/>
</dbReference>
<dbReference type="SUPFAM" id="SSF90257">
    <property type="entry name" value="Myosin rod fragments"/>
    <property type="match status" value="3"/>
</dbReference>
<dbReference type="SUPFAM" id="SSF52540">
    <property type="entry name" value="P-loop containing nucleoside triphosphate hydrolases"/>
    <property type="match status" value="1"/>
</dbReference>
<dbReference type="PROSITE" id="PS50096">
    <property type="entry name" value="IQ"/>
    <property type="match status" value="1"/>
</dbReference>
<dbReference type="PROSITE" id="PS51456">
    <property type="entry name" value="MYOSIN_MOTOR"/>
    <property type="match status" value="1"/>
</dbReference>
<dbReference type="PROSITE" id="PS51844">
    <property type="entry name" value="SH3_LIKE"/>
    <property type="match status" value="1"/>
</dbReference>
<gene>
    <name type="primary">Myh14</name>
</gene>
<feature type="initiator methionine" description="Removed" evidence="2">
    <location>
        <position position="1"/>
    </location>
</feature>
<feature type="chain" id="PRO_0000123432" description="Myosin-14">
    <location>
        <begin position="2"/>
        <end position="2000"/>
    </location>
</feature>
<feature type="domain" description="Myosin N-terminal SH3-like" evidence="6">
    <location>
        <begin position="47"/>
        <end position="97"/>
    </location>
</feature>
<feature type="domain" description="Myosin motor" evidence="5">
    <location>
        <begin position="101"/>
        <end position="804"/>
    </location>
</feature>
<feature type="domain" description="IQ" evidence="4">
    <location>
        <begin position="807"/>
        <end position="836"/>
    </location>
</feature>
<feature type="region of interest" description="Actin-binding" evidence="5">
    <location>
        <begin position="682"/>
        <end position="704"/>
    </location>
</feature>
<feature type="region of interest" description="Disordered" evidence="7">
    <location>
        <begin position="1173"/>
        <end position="1197"/>
    </location>
</feature>
<feature type="region of interest" description="Disordered" evidence="7">
    <location>
        <begin position="1260"/>
        <end position="1311"/>
    </location>
</feature>
<feature type="region of interest" description="Disordered" evidence="7">
    <location>
        <begin position="1597"/>
        <end position="1629"/>
    </location>
</feature>
<feature type="region of interest" description="Disordered" evidence="7">
    <location>
        <begin position="1720"/>
        <end position="1751"/>
    </location>
</feature>
<feature type="region of interest" description="Disordered" evidence="7">
    <location>
        <begin position="1910"/>
        <end position="1942"/>
    </location>
</feature>
<feature type="region of interest" description="Disordered" evidence="7">
    <location>
        <begin position="1967"/>
        <end position="2000"/>
    </location>
</feature>
<feature type="coiled-coil region" evidence="3">
    <location>
        <begin position="866"/>
        <end position="1951"/>
    </location>
</feature>
<feature type="compositionally biased region" description="Basic and acidic residues" evidence="7">
    <location>
        <begin position="1290"/>
        <end position="1304"/>
    </location>
</feature>
<feature type="compositionally biased region" description="Basic and acidic residues" evidence="7">
    <location>
        <begin position="1720"/>
        <end position="1732"/>
    </location>
</feature>
<feature type="compositionally biased region" description="Acidic residues" evidence="7">
    <location>
        <begin position="1971"/>
        <end position="1980"/>
    </location>
</feature>
<feature type="compositionally biased region" description="Low complexity" evidence="7">
    <location>
        <begin position="1981"/>
        <end position="1991"/>
    </location>
</feature>
<feature type="binding site" evidence="3">
    <location>
        <begin position="194"/>
        <end position="201"/>
    </location>
    <ligand>
        <name>ATP</name>
        <dbReference type="ChEBI" id="CHEBI:30616"/>
    </ligand>
</feature>
<feature type="modified residue" description="N-acetylalanine" evidence="2">
    <location>
        <position position="2"/>
    </location>
</feature>
<feature type="modified residue" description="Phosphothreonine" evidence="14">
    <location>
        <position position="33"/>
    </location>
</feature>
<feature type="modified residue" description="Phosphoserine" evidence="2">
    <location>
        <position position="56"/>
    </location>
</feature>
<feature type="modified residue" description="Phosphoserine" evidence="14">
    <location>
        <position position="925"/>
    </location>
</feature>
<feature type="modified residue" description="Phosphothreonine" evidence="2">
    <location>
        <position position="1198"/>
    </location>
</feature>
<feature type="modified residue" description="Phosphoserine" evidence="14">
    <location>
        <position position="1249"/>
    </location>
</feature>
<feature type="modified residue" description="Phosphoserine" evidence="14">
    <location>
        <position position="1280"/>
    </location>
</feature>
<feature type="modified residue" description="Phosphoserine" evidence="14">
    <location>
        <position position="1973"/>
    </location>
</feature>
<feature type="modified residue" description="Phosphoserine" evidence="2">
    <location>
        <position position="1985"/>
    </location>
</feature>
<feature type="modified residue" description="Phosphothreonine" evidence="14">
    <location>
        <position position="1998"/>
    </location>
</feature>
<feature type="splice variant" id="VSP_014633" description="In isoform 2 and isoform 3." evidence="11 12">
    <location>
        <begin position="228"/>
        <end position="235"/>
    </location>
</feature>
<feature type="splice variant" id="VSP_044759" description="In isoform 3." evidence="12">
    <original>D</original>
    <variation>DEQGGLQQFTLLGSFPSPSPGPAGRLGSGASPPGVGSLCAPT</variation>
    <location>
        <position position="644"/>
    </location>
</feature>
<comment type="function">
    <text evidence="1">Cellular myosin that appears to play a role in cytokinesis, cell shape, and specialized functions such as secretion and capping.</text>
</comment>
<comment type="subunit">
    <text evidence="1">Myosin is a hexameric protein that consists of 2 heavy chain subunits (MHC), 2 alkali light chain subunits (MLC) and 2 regulatory light chain subunits (MLC-2).</text>
</comment>
<comment type="alternative products">
    <event type="alternative splicing"/>
    <isoform>
        <id>Q6URW6-1</id>
        <name>1</name>
        <name>NM II-C1</name>
        <sequence type="displayed"/>
    </isoform>
    <isoform>
        <id>Q6URW6-2</id>
        <name>2</name>
        <name>NM II-C0</name>
        <sequence type="described" ref="VSP_014633"/>
    </isoform>
    <isoform>
        <id>Q6URW6-3</id>
        <name>3</name>
        <name>NM II-C2</name>
        <sequence type="described" ref="VSP_014633 VSP_044759"/>
    </isoform>
</comment>
<comment type="tissue specificity">
    <text evidence="8 9">Highest levels in lung, kidney, brain and colon, very low levels in liver and bladder and no expression in spleen or seminal vesicle (at protein level). Isoform 1 is expressed in liver, kidney and testis with low levels in skeletal muscle and heart. Isoform 1 and isoform 2 are expressed in brain and lung. Isoform 2 is the main isoform expressed in skeletal muscle and heart. Isoform 3 is limited to brain stem, cerebellum and spinal cord.</text>
</comment>
<comment type="developmental stage">
    <text evidence="8 9 10">Widely expressed throughout the embryo at 11.5 dpc. Enhanced expression in the developing pituitary at 11.5 dpc. Expressed in developing lung from 13.5 dpc. At 16.5 dpc, confined to airway epithelial cells, developing sensory area of the cochlea and intestinal epithelial cells, particularly concentrated at their apical border.</text>
</comment>
<comment type="domain">
    <text evidence="1">The rodlike tail sequence is highly repetitive, showing cycles of a 28-residue repeat pattern composed of 4 heptapeptides, characteristic for alpha-helical coiled coils.</text>
</comment>
<comment type="disruption phenotype">
    <text evidence="10">Survival to adulthood with no obvious defects in brain structure, lung and heart development and no evidence for defective cell division. Deletion in animals expressing only 12% of wild-type amounts of Myh10 results in an increase in cardiac myocyte hypertrophy and interstitial fibrosis compared with the Myh10 hypomorphic animal.</text>
</comment>
<comment type="miscellaneous">
    <molecule>Isoform 1</molecule>
    <text>Requires phosphorylation of the myosin regulatory light chain for activity.</text>
</comment>
<comment type="miscellaneous">
    <molecule>Isoform 2</molecule>
    <text evidence="13">Requires phosphorylation of the myosin regulatory light chain for activity.</text>
</comment>
<comment type="miscellaneous">
    <molecule>Isoform 3</molecule>
    <text evidence="13">Constitutively active isoform which does not require phosphorylation of the regulatory myosin light chain for activity.</text>
</comment>
<comment type="similarity">
    <text evidence="13">Belongs to the TRAFAC class myosin-kinesin ATPase superfamily. Myosin family.</text>
</comment>
<keyword id="KW-0007">Acetylation</keyword>
<keyword id="KW-0009">Actin-binding</keyword>
<keyword id="KW-0025">Alternative splicing</keyword>
<keyword id="KW-0067">ATP-binding</keyword>
<keyword id="KW-0112">Calmodulin-binding</keyword>
<keyword id="KW-0133">Cell shape</keyword>
<keyword id="KW-0175">Coiled coil</keyword>
<keyword id="KW-0903">Direct protein sequencing</keyword>
<keyword id="KW-0505">Motor protein</keyword>
<keyword id="KW-0518">Myosin</keyword>
<keyword id="KW-0547">Nucleotide-binding</keyword>
<keyword id="KW-0597">Phosphoprotein</keyword>
<keyword id="KW-1185">Reference proteome</keyword>
<name>MYH14_MOUSE</name>
<protein>
    <recommendedName>
        <fullName>Myosin-14</fullName>
    </recommendedName>
    <alternativeName>
        <fullName>Myosin heavy chain 14</fullName>
    </alternativeName>
    <alternativeName>
        <fullName>Myosin heavy chain, non-muscle IIc</fullName>
    </alternativeName>
    <alternativeName>
        <fullName>Non-muscle myosin heavy chain IIc</fullName>
        <shortName>NMHC II-C</shortName>
    </alternativeName>
</protein>
<organism>
    <name type="scientific">Mus musculus</name>
    <name type="common">Mouse</name>
    <dbReference type="NCBI Taxonomy" id="10090"/>
    <lineage>
        <taxon>Eukaryota</taxon>
        <taxon>Metazoa</taxon>
        <taxon>Chordata</taxon>
        <taxon>Craniata</taxon>
        <taxon>Vertebrata</taxon>
        <taxon>Euteleostomi</taxon>
        <taxon>Mammalia</taxon>
        <taxon>Eutheria</taxon>
        <taxon>Euarchontoglires</taxon>
        <taxon>Glires</taxon>
        <taxon>Rodentia</taxon>
        <taxon>Myomorpha</taxon>
        <taxon>Muroidea</taxon>
        <taxon>Muridae</taxon>
        <taxon>Murinae</taxon>
        <taxon>Mus</taxon>
        <taxon>Mus</taxon>
    </lineage>
</organism>
<reference key="1">
    <citation type="journal article" date="2004" name="J. Biol. Chem.">
        <title>Identification and characterization of nonmuscle myosin II-C, a new member of the myosin II family.</title>
        <authorList>
            <person name="Golomb E."/>
            <person name="Ma X."/>
            <person name="Jana S.S."/>
            <person name="Preston Y.A."/>
            <person name="Kawamoto S."/>
            <person name="Shoham N.G."/>
            <person name="Goldin E."/>
            <person name="Conti M.A."/>
            <person name="Sellers J.R."/>
            <person name="Adelstein R.S."/>
        </authorList>
    </citation>
    <scope>NUCLEOTIDE SEQUENCE [MRNA] (ISOFORMS 1 AND 2)</scope>
    <scope>TISSUE SPECIFICITY</scope>
    <scope>DEVELOPMENTAL STAGE</scope>
    <source>
        <strain>C57BL/6J</strain>
        <tissue>Lung</tissue>
    </source>
</reference>
<reference key="2">
    <citation type="journal article" date="2009" name="J. Biol. Chem.">
        <title>An alternatively spliced isoform of non-muscle myosin II-C is not regulated by myosin light chain phosphorylation.</title>
        <authorList>
            <person name="Jana S.S."/>
            <person name="Kim K.Y."/>
            <person name="Mao J."/>
            <person name="Kawamoto S."/>
            <person name="Sellers J.R."/>
            <person name="Adelstein R.S."/>
        </authorList>
    </citation>
    <scope>NUCLEOTIDE SEQUENCE [MRNA] (ISOFORM 3)</scope>
    <scope>ALTERNATIVE SPLICING</scope>
    <scope>TISSUE SPECIFICITY</scope>
    <scope>DEVELOPMENTAL STAGE</scope>
    <source>
        <tissue>Cerebellum</tissue>
    </source>
</reference>
<reference key="3">
    <citation type="journal article" date="2009" name="PLoS Biol.">
        <title>Lineage-specific biology revealed by a finished genome assembly of the mouse.</title>
        <authorList>
            <person name="Church D.M."/>
            <person name="Goodstadt L."/>
            <person name="Hillier L.W."/>
            <person name="Zody M.C."/>
            <person name="Goldstein S."/>
            <person name="She X."/>
            <person name="Bult C.J."/>
            <person name="Agarwala R."/>
            <person name="Cherry J.L."/>
            <person name="DiCuccio M."/>
            <person name="Hlavina W."/>
            <person name="Kapustin Y."/>
            <person name="Meric P."/>
            <person name="Maglott D."/>
            <person name="Birtle Z."/>
            <person name="Marques A.C."/>
            <person name="Graves T."/>
            <person name="Zhou S."/>
            <person name="Teague B."/>
            <person name="Potamousis K."/>
            <person name="Churas C."/>
            <person name="Place M."/>
            <person name="Herschleb J."/>
            <person name="Runnheim R."/>
            <person name="Forrest D."/>
            <person name="Amos-Landgraf J."/>
            <person name="Schwartz D.C."/>
            <person name="Cheng Z."/>
            <person name="Lindblad-Toh K."/>
            <person name="Eichler E.E."/>
            <person name="Ponting C.P."/>
        </authorList>
    </citation>
    <scope>NUCLEOTIDE SEQUENCE [LARGE SCALE GENOMIC DNA]</scope>
    <source>
        <strain>C57BL/6J</strain>
    </source>
</reference>
<reference key="4">
    <citation type="journal article" date="2004" name="Genome Res.">
        <title>The status, quality, and expansion of the NIH full-length cDNA project: the Mammalian Gene Collection (MGC).</title>
        <authorList>
            <consortium name="The MGC Project Team"/>
        </authorList>
    </citation>
    <scope>NUCLEOTIDE SEQUENCE [LARGE SCALE MRNA] OF 1220-2000</scope>
    <source>
        <strain>FVB/N</strain>
        <tissue>Mammary tumor</tissue>
    </source>
</reference>
<reference key="5">
    <citation type="submission" date="2009-01" db="UniProtKB">
        <authorList>
            <person name="Lubec G."/>
            <person name="Sunyer B."/>
            <person name="Chen W.-Q."/>
        </authorList>
    </citation>
    <scope>PROTEIN SEQUENCE OF 1618-1630</scope>
    <scope>IDENTIFICATION BY MASS SPECTROMETRY</scope>
    <source>
        <strain>OF1</strain>
        <tissue>Hippocampus</tissue>
    </source>
</reference>
<reference key="6">
    <citation type="journal article" date="2010" name="Cell">
        <title>A tissue-specific atlas of mouse protein phosphorylation and expression.</title>
        <authorList>
            <person name="Huttlin E.L."/>
            <person name="Jedrychowski M.P."/>
            <person name="Elias J.E."/>
            <person name="Goswami T."/>
            <person name="Rad R."/>
            <person name="Beausoleil S.A."/>
            <person name="Villen J."/>
            <person name="Haas W."/>
            <person name="Sowa M.E."/>
            <person name="Gygi S.P."/>
        </authorList>
    </citation>
    <scope>PHOSPHORYLATION [LARGE SCALE ANALYSIS] AT THR-33; SER-925; SER-1249; SER-1280; SER-1973 AND THR-1998</scope>
    <scope>IDENTIFICATION BY MASS SPECTROMETRY [LARGE SCALE ANALYSIS]</scope>
    <source>
        <tissue>Brain</tissue>
        <tissue>Brown adipose tissue</tissue>
        <tissue>Kidney</tissue>
        <tissue>Liver</tissue>
        <tissue>Lung</tissue>
        <tissue>Pancreas</tissue>
    </source>
</reference>
<reference key="7">
    <citation type="journal article" date="2010" name="Mol. Biol. Cell">
        <title>Ablation of nonmuscle myosin II-B and II-C reveals a role for nonmuscle myosin II in cardiac myocyte karyokinesis.</title>
        <authorList>
            <person name="Ma X."/>
            <person name="Jana S.S."/>
            <person name="Conti M.A."/>
            <person name="Kawamoto S."/>
            <person name="Claycomb W.C."/>
            <person name="Adelstein R.S."/>
        </authorList>
    </citation>
    <scope>DEVELOPMENTAL STAGE</scope>
    <scope>DISRUPTION PHENOTYPE</scope>
</reference>
<proteinExistence type="evidence at protein level"/>
<accession>Q6URW6</accession>
<accession>B3F3T1</accession>
<accession>Q80V64</accession>
<accession>Q80ZE6</accession>
<sequence length="2000" mass="228586">MAAVTMSVSGRKVASRPGPVPEAAQSFLYAPRTPNVGGPGGPQVEWTARRMVWVPSELHGFEAAALRDEGEEEAEVELAESGRRLRLPRDQIQRMNPPKFSKAEDMAELTCLNEASVLHNLRERYYSGLIYTYSGLFCVVINPYKQLPIYTEAIVEMYRGKKRHEVPPHVYAVTEGAYRSMLQDREDQSILCTGESGAGKTENTKKVIQYLAHVASSPKGRKEPGVPASVSTMSYGELERQLLQANPILEAFGNAKTVKNDNSSRFGKFIRINFDIAGYIVGANIETYLLEKSRAIRQAKDECSFHIFYQLLGGAGEQLKADLLLEPCSHYRFLTNGPSSSPGQERELFQETLESLRVLGLLPEEITAMLRTVSAVLQFGNIVLKKERNTDQATMPDNTAAQKLCRLLGLGVTDFSRALLTPRIKVGRDYVQKAQTKEQADFALEALAKATYERLFRWLVLRLNRALDRSPRQGASFLGILDIAGFEIFQLNSFEQLCINYTNEKLQQLFNHTMFVLEQEEYQREGIPWTFLDFGLDLQPCIDLIERPANPPGLLALLDEECWFPKATDKSFVEKVAQEQGSHPKFQRPRNLRDQADFSVLHYAGKVDYKASEWLMKNMDPLNDNVAALLHQSTDRLTAEIWKDVEGIVGLEQVSSLGDGPPGGRPRRGMFRTVGQLYKESLSRLMATLSNTNPSFVRCIVPNHEKRAGKLEPRLVLDQLRCNGVLEGIRICRQGFPNRILFQEFRQRYEILTPNAIPKGFMDGKQACEKMIQALELDPNLYRVGQSKIFFRAGVLAQLEEERDLKVTDIIVSFQAAARGYLARRAFQRRQQQQSALRVMQRNCAAYLKLRNWQWWRLFIKVKPLLQVTRQDEVLQARAQELQKVQELQQQSAREVGELQGRVAQLEEERTRLAEQLRAEAELCSEAEETRARLAARKQELELVVTELEARVGEEEECSRQLQSEKKRLQQHIQELESHLEAEEGARQKLQLEKVTTEAKMKKFEEDLLLLEDQNSKLSKERRLLEERLAEFSSQAAEEEEKVKSLNKLRLKYEATISDMEDRLKKEEKGRQELEKLKRRLDGESSELQEQMVEQKQRAEELLAQLGRKEDELQAALLRAEEEGGARAQLLKSLREAQAGLAEAQEDLEAERVARAKAEKQRRDLGEELEALRGELEDTLDSTNAQQELRSKREQEVTELKKALEEESRAHEVSMQELRQRHSQALVEMAEQLEQARRGKGVWEKTRLSLEAEVSELKAELSSLQTSRQEGEQKRRRLESQLQEVQGRSSDSERARSEAAEKLQRAQAELESVSTALSEAESKAIRLGKELSSAESQLHDTQELLQEETRAKLALGSRVRALEAEAAGLREQMEEEVVARERAGRELQSTQAQLSEWRRRQEEEAAVLEAGEEARRRAAREAETLTQRLAEKTEAVERLERARRRLQQELDDATVDLGQQKQLLSTLEKKQRKFDQLLAEEKAAVLRAVEDRERIEAEGREREARALSLTRALEEEQEAREELERQNRALRAELEALLSSKDDVGKNVHELERARKAAEQAASDLRTQVTELEDELTAAEDAKLRLEVTVQALKAQHERDLQGRDDAGEERRRQLAKQLRDAEVERDEERKQRALAMAARKKLELELEELKAQTSAAGQGKEEAVKQLKKMQVQMKELWREVEETRSSRDEMFTLSRENEKKLKGLEAEVLRLQEELAASDRARRQAQQDRDEMAEEVASGNLSKAATLEEKRQLEGRLSQLEEELEEEQNNSELLKDHYRKLVLQVESLTTELSAERSFSAKAESGRQQLERQIQELRARLGEEDAGARARQKMLIAALESKLAQAEEQLEQESRERILSGKLVRRAEKRLKEVVLQVDEERRVADQVRDQLEKSNLRLKQLKRQLEEAEEEASRAQAGRRRLQRELEDVTESAESMNREVTTLRNRLRRGPLTFTTRTVRQVFRLEEGVASDEEEAEGAEPGSAPGQEPEAPPPATPQ</sequence>